<proteinExistence type="evidence at protein level"/>
<comment type="subcellular location">
    <subcellularLocation>
        <location evidence="2">Secreted</location>
    </subcellularLocation>
</comment>
<comment type="tissue specificity">
    <text evidence="4">Expressed by the venom duct.</text>
</comment>
<comment type="domain">
    <text evidence="3">The cysteine framework is III (CC-C-C-CC). Classified in the M-2 branch, since 2 residues stand between the fourth and the fifth cysteine residues.</text>
</comment>
<comment type="similarity">
    <text evidence="3">Belongs to the conotoxin M superfamily.</text>
</comment>
<reference key="1">
    <citation type="journal article" date="2012" name="J. Proteome Res.">
        <title>Constrained de novo sequencing of conotoxins.</title>
        <authorList>
            <person name="Bhatia S."/>
            <person name="Kil Y.J."/>
            <person name="Ueberheide B."/>
            <person name="Chait B.T."/>
            <person name="Tayo L."/>
            <person name="Cruz L."/>
            <person name="Lu B."/>
            <person name="Yates J.R. III"/>
            <person name="Bern M."/>
        </authorList>
    </citation>
    <scope>PROTEIN SEQUENCE</scope>
    <scope>IDENTIFICATION BY MASS SPECTROMETRY</scope>
    <scope>SUBCELLULAR LOCATION</scope>
    <scope>HYDROXYLATION AT PRO-13</scope>
    <source>
        <tissue>Venom</tissue>
    </source>
</reference>
<dbReference type="GO" id="GO:0005576">
    <property type="term" value="C:extracellular region"/>
    <property type="evidence" value="ECO:0007669"/>
    <property type="project" value="UniProtKB-SubCell"/>
</dbReference>
<dbReference type="GO" id="GO:0090729">
    <property type="term" value="F:toxin activity"/>
    <property type="evidence" value="ECO:0007669"/>
    <property type="project" value="UniProtKB-KW"/>
</dbReference>
<organism>
    <name type="scientific">Conus textile</name>
    <name type="common">Cloth-of-gold cone</name>
    <dbReference type="NCBI Taxonomy" id="6494"/>
    <lineage>
        <taxon>Eukaryota</taxon>
        <taxon>Metazoa</taxon>
        <taxon>Spiralia</taxon>
        <taxon>Lophotrochozoa</taxon>
        <taxon>Mollusca</taxon>
        <taxon>Gastropoda</taxon>
        <taxon>Caenogastropoda</taxon>
        <taxon>Neogastropoda</taxon>
        <taxon>Conoidea</taxon>
        <taxon>Conidae</taxon>
        <taxon>Conus</taxon>
        <taxon>Cylinder</taxon>
    </lineage>
</organism>
<keyword id="KW-0903">Direct protein sequencing</keyword>
<keyword id="KW-1015">Disulfide bond</keyword>
<keyword id="KW-0379">Hydroxylation</keyword>
<keyword id="KW-0964">Secreted</keyword>
<keyword id="KW-0800">Toxin</keyword>
<protein>
    <recommendedName>
        <fullName evidence="3">Conotoxin tx3j</fullName>
    </recommendedName>
</protein>
<evidence type="ECO:0000250" key="1">
    <source>
        <dbReference type="UniProtKB" id="P0CI24"/>
    </source>
</evidence>
<evidence type="ECO:0000269" key="2">
    <source>
    </source>
</evidence>
<evidence type="ECO:0000305" key="3"/>
<evidence type="ECO:0000305" key="4">
    <source>
    </source>
</evidence>
<sequence length="16" mass="1805">CCDDSECSTSCWPCCY</sequence>
<feature type="peptide" id="PRO_0000445049" description="Conotoxin tx3j" evidence="2">
    <location>
        <begin position="1"/>
        <end position="16"/>
    </location>
</feature>
<feature type="modified residue" description="4-hydroxyproline" evidence="2">
    <location>
        <position position="13"/>
    </location>
</feature>
<feature type="disulfide bond" evidence="1">
    <location>
        <begin position="1"/>
        <end position="15"/>
    </location>
</feature>
<feature type="disulfide bond" evidence="1">
    <location>
        <begin position="2"/>
        <end position="11"/>
    </location>
</feature>
<feature type="disulfide bond" evidence="1">
    <location>
        <begin position="7"/>
        <end position="14"/>
    </location>
</feature>
<name>M3J_CONTE</name>
<accession>P0DPL3</accession>